<sequence>MIKVMVMKIAVIGGTGDQGLGLALRFAVAGEEVIIGSRDAEKASKAASKVLEIAGRDDISVEGATNPDAAASADVVVLTVPLQAQMVTLASIRDQVRDKVLIDATVPIDSCIGGSAVRYIDLWEGSAAERAARFLREQGTRVAAAFNNISASALLEVSEPVDCDCLVASDHRDALEVAAELAEKIDGVRAIECGGLENARIIEKITPLLINLNIRNRVRNAGIRITNLPEQE</sequence>
<protein>
    <recommendedName>
        <fullName evidence="4">F420-dependent NADP reductase</fullName>
        <ecNumber evidence="3">1.5.1.40</ecNumber>
    </recommendedName>
    <alternativeName>
        <fullName>F420H2:NADP oxidoreductase</fullName>
    </alternativeName>
</protein>
<comment type="function">
    <text evidence="1 3">Catalyzes the reduction of NADP(+) with F420H(2) via hydride transfer, and likely the reverse reaction, i.e. the reduction of F420 with NADPH. Probably functions in the regeneration of NADPH required in biosynthetic reactions. Is specific for reduced F420 as electron donor for the reduction of NADP; neither reduced FAD nor FMN can act as electron donor. The enzyme is also specific for NADP; NAD is not utilized as substrate.</text>
</comment>
<comment type="catalytic activity">
    <reaction evidence="3">
        <text>reduced coenzyme F420-(gamma-L-Glu)(n) + NADP(+) = oxidized coenzyme F420-(gamma-L-Glu)(n) + NADPH + 2 H(+)</text>
        <dbReference type="Rhea" id="RHEA:31363"/>
        <dbReference type="Rhea" id="RHEA-COMP:12939"/>
        <dbReference type="Rhea" id="RHEA-COMP:14378"/>
        <dbReference type="ChEBI" id="CHEBI:15378"/>
        <dbReference type="ChEBI" id="CHEBI:57783"/>
        <dbReference type="ChEBI" id="CHEBI:58349"/>
        <dbReference type="ChEBI" id="CHEBI:133980"/>
        <dbReference type="ChEBI" id="CHEBI:139511"/>
        <dbReference type="EC" id="1.5.1.40"/>
    </reaction>
</comment>
<comment type="biophysicochemical properties">
    <kinetics>
        <KM evidence="3">128 uM for reduced coenzyme F420</KM>
        <KM evidence="3">40 uM for NADP(+)</KM>
    </kinetics>
    <phDependence>
        <text evidence="3">Optimum pH is 8.0.</text>
    </phDependence>
    <temperatureDependence>
        <text evidence="3">Optimum temperature is 60 degrees Celsius. Is extremely thermostable. No detectable activity is lost when the enzyme is incubated at 65 degrees Celsius for 4 hours.</text>
    </temperatureDependence>
</comment>
<comment type="subunit">
    <text evidence="3">Homotetramer.</text>
</comment>
<comment type="similarity">
    <text evidence="5">Belongs to the F420-dependent NADP reductase family.</text>
</comment>
<organism>
    <name type="scientific">Methanothermobacter thermautotrophicus (strain ATCC 29096 / DSM 1053 / JCM 10044 / NBRC 100330 / Delta H)</name>
    <name type="common">Methanobacterium thermoautotrophicum</name>
    <dbReference type="NCBI Taxonomy" id="187420"/>
    <lineage>
        <taxon>Archaea</taxon>
        <taxon>Methanobacteriati</taxon>
        <taxon>Methanobacteriota</taxon>
        <taxon>Methanomada group</taxon>
        <taxon>Methanobacteria</taxon>
        <taxon>Methanobacteriales</taxon>
        <taxon>Methanobacteriaceae</taxon>
        <taxon>Methanothermobacter</taxon>
    </lineage>
</organism>
<reference key="1">
    <citation type="journal article" date="1997" name="J. Bacteriol.">
        <title>Complete genome sequence of Methanobacterium thermoautotrophicum deltaH: functional analysis and comparative genomics.</title>
        <authorList>
            <person name="Smith D.R."/>
            <person name="Doucette-Stamm L.A."/>
            <person name="Deloughery C."/>
            <person name="Lee H.-M."/>
            <person name="Dubois J."/>
            <person name="Aldredge T."/>
            <person name="Bashirzadeh R."/>
            <person name="Blakely D."/>
            <person name="Cook R."/>
            <person name="Gilbert K."/>
            <person name="Harrison D."/>
            <person name="Hoang L."/>
            <person name="Keagle P."/>
            <person name="Lumm W."/>
            <person name="Pothier B."/>
            <person name="Qiu D."/>
            <person name="Spadafora R."/>
            <person name="Vicare R."/>
            <person name="Wang Y."/>
            <person name="Wierzbowski J."/>
            <person name="Gibson R."/>
            <person name="Jiwani N."/>
            <person name="Caruso A."/>
            <person name="Bush D."/>
            <person name="Safer H."/>
            <person name="Patwell D."/>
            <person name="Prabhakar S."/>
            <person name="McDougall S."/>
            <person name="Shimer G."/>
            <person name="Goyal A."/>
            <person name="Pietrovski S."/>
            <person name="Church G.M."/>
            <person name="Daniels C.J."/>
            <person name="Mao J.-I."/>
            <person name="Rice P."/>
            <person name="Noelling J."/>
            <person name="Reeve J.N."/>
        </authorList>
    </citation>
    <scope>NUCLEOTIDE SEQUENCE [LARGE SCALE GENOMIC DNA]</scope>
    <source>
        <strain>ATCC 29096 / DSM 1053 / JCM 10044 / NBRC 100330 / Delta H</strain>
    </source>
</reference>
<reference key="2">
    <citation type="journal article" date="1984" name="Biochim. Biophys. Acta">
        <title>Purification and properties of an F420-dependent NADP reductase from methanobacterium thermoautotrophicum.</title>
        <authorList>
            <person name="Eirich L.D."/>
            <person name="Dugger R.S."/>
        </authorList>
    </citation>
    <scope>FUNCTION</scope>
    <scope>CATALYTIC ACTIVITY</scope>
    <scope>SUBSTRATE SPECIFICITY</scope>
    <scope>SUBUNIT</scope>
    <scope>BIOPHYSICOCHEMICAL PROPERTIES</scope>
    <source>
        <strain>ATCC 29096 / DSM 1053 / JCM 10044 / NBRC 100330 / Delta H</strain>
    </source>
</reference>
<proteinExistence type="evidence at protein level"/>
<gene>
    <name type="primary">fno</name>
    <name type="ordered locus">MTH_248</name>
</gene>
<accession>O26350</accession>
<feature type="chain" id="PRO_0000087154" description="F420-dependent NADP reductase">
    <location>
        <begin position="1"/>
        <end position="232"/>
    </location>
</feature>
<feature type="binding site" evidence="2">
    <location>
        <begin position="15"/>
        <end position="18"/>
    </location>
    <ligand>
        <name>NADP(+)</name>
        <dbReference type="ChEBI" id="CHEBI:58349"/>
    </ligand>
</feature>
<feature type="binding site" evidence="2">
    <location>
        <begin position="37"/>
        <end position="38"/>
    </location>
    <ligand>
        <name>NADP(+)</name>
        <dbReference type="ChEBI" id="CHEBI:58349"/>
    </ligand>
</feature>
<feature type="binding site" evidence="2">
    <location>
        <position position="42"/>
    </location>
    <ligand>
        <name>NADP(+)</name>
        <dbReference type="ChEBI" id="CHEBI:58349"/>
    </ligand>
</feature>
<feature type="binding site" evidence="2">
    <location>
        <position position="80"/>
    </location>
    <ligand>
        <name>NADP(+)</name>
        <dbReference type="ChEBI" id="CHEBI:58349"/>
    </ligand>
</feature>
<feature type="binding site" evidence="2">
    <location>
        <position position="106"/>
    </location>
    <ligand>
        <name>NADP(+)</name>
        <dbReference type="ChEBI" id="CHEBI:58349"/>
    </ligand>
</feature>
<feature type="binding site" evidence="2">
    <location>
        <position position="151"/>
    </location>
    <ligand>
        <name>NADP(+)</name>
        <dbReference type="ChEBI" id="CHEBI:58349"/>
    </ligand>
</feature>
<evidence type="ECO:0000250" key="1">
    <source>
        <dbReference type="UniProtKB" id="D9PVP5"/>
    </source>
</evidence>
<evidence type="ECO:0000250" key="2">
    <source>
        <dbReference type="UniProtKB" id="O29370"/>
    </source>
</evidence>
<evidence type="ECO:0000269" key="3">
    <source ref="2"/>
</evidence>
<evidence type="ECO:0000303" key="4">
    <source ref="2"/>
</evidence>
<evidence type="ECO:0000305" key="5"/>
<name>FNO_METTH</name>
<dbReference type="EC" id="1.5.1.40" evidence="3"/>
<dbReference type="EMBL" id="AE000666">
    <property type="protein sequence ID" value="AAB84754.1"/>
    <property type="molecule type" value="Genomic_DNA"/>
</dbReference>
<dbReference type="PIR" id="A69131">
    <property type="entry name" value="A69131"/>
</dbReference>
<dbReference type="SMR" id="O26350"/>
<dbReference type="STRING" id="187420.MTH_248"/>
<dbReference type="PaxDb" id="187420-MTH_248"/>
<dbReference type="EnsemblBacteria" id="AAB84754">
    <property type="protein sequence ID" value="AAB84754"/>
    <property type="gene ID" value="MTH_248"/>
</dbReference>
<dbReference type="KEGG" id="mth:MTH_248"/>
<dbReference type="PATRIC" id="fig|187420.15.peg.217"/>
<dbReference type="HOGENOM" id="CLU_076368_1_0_2"/>
<dbReference type="InParanoid" id="O26350"/>
<dbReference type="Proteomes" id="UP000005223">
    <property type="component" value="Chromosome"/>
</dbReference>
<dbReference type="GO" id="GO:0005886">
    <property type="term" value="C:plasma membrane"/>
    <property type="evidence" value="ECO:0007669"/>
    <property type="project" value="TreeGrafter"/>
</dbReference>
<dbReference type="GO" id="GO:0102261">
    <property type="term" value="F:8-hydroxy-5-deazaflavin:NADPH oxidoreductase activity"/>
    <property type="evidence" value="ECO:0007669"/>
    <property type="project" value="UniProtKB-EC"/>
</dbReference>
<dbReference type="GO" id="GO:0070967">
    <property type="term" value="F:coenzyme F420 binding"/>
    <property type="evidence" value="ECO:0007669"/>
    <property type="project" value="InterPro"/>
</dbReference>
<dbReference type="GO" id="GO:0008823">
    <property type="term" value="F:cupric reductase (NADH) activity"/>
    <property type="evidence" value="ECO:0007669"/>
    <property type="project" value="TreeGrafter"/>
</dbReference>
<dbReference type="GO" id="GO:0052851">
    <property type="term" value="F:ferric-chelate reductase (NADPH) activity"/>
    <property type="evidence" value="ECO:0007669"/>
    <property type="project" value="TreeGrafter"/>
</dbReference>
<dbReference type="GO" id="GO:0050661">
    <property type="term" value="F:NADP binding"/>
    <property type="evidence" value="ECO:0007669"/>
    <property type="project" value="InterPro"/>
</dbReference>
<dbReference type="GO" id="GO:0016651">
    <property type="term" value="F:oxidoreductase activity, acting on NAD(P)H"/>
    <property type="evidence" value="ECO:0007669"/>
    <property type="project" value="InterPro"/>
</dbReference>
<dbReference type="GO" id="GO:0015677">
    <property type="term" value="P:copper ion import"/>
    <property type="evidence" value="ECO:0007669"/>
    <property type="project" value="TreeGrafter"/>
</dbReference>
<dbReference type="GO" id="GO:0006740">
    <property type="term" value="P:NADPH regeneration"/>
    <property type="evidence" value="ECO:0007669"/>
    <property type="project" value="InterPro"/>
</dbReference>
<dbReference type="Gene3D" id="3.40.50.720">
    <property type="entry name" value="NAD(P)-binding Rossmann-like Domain"/>
    <property type="match status" value="1"/>
</dbReference>
<dbReference type="InterPro" id="IPR036291">
    <property type="entry name" value="NAD(P)-bd_dom_sf"/>
</dbReference>
<dbReference type="InterPro" id="IPR010185">
    <property type="entry name" value="NpdG"/>
</dbReference>
<dbReference type="InterPro" id="IPR028939">
    <property type="entry name" value="P5C_Rdtase_cat_N"/>
</dbReference>
<dbReference type="InterPro" id="IPR051267">
    <property type="entry name" value="STEAP_metalloreductase"/>
</dbReference>
<dbReference type="NCBIfam" id="TIGR01915">
    <property type="entry name" value="npdG"/>
    <property type="match status" value="1"/>
</dbReference>
<dbReference type="PANTHER" id="PTHR14239">
    <property type="entry name" value="DUDULIN-RELATED"/>
    <property type="match status" value="1"/>
</dbReference>
<dbReference type="PANTHER" id="PTHR14239:SF0">
    <property type="entry name" value="F420-DEPENDENT NADP REDUCTASE"/>
    <property type="match status" value="1"/>
</dbReference>
<dbReference type="Pfam" id="PF03807">
    <property type="entry name" value="F420_oxidored"/>
    <property type="match status" value="1"/>
</dbReference>
<dbReference type="SUPFAM" id="SSF51735">
    <property type="entry name" value="NAD(P)-binding Rossmann-fold domains"/>
    <property type="match status" value="1"/>
</dbReference>
<keyword id="KW-0521">NADP</keyword>
<keyword id="KW-0560">Oxidoreductase</keyword>
<keyword id="KW-1185">Reference proteome</keyword>